<accession>B6I2F8</accession>
<proteinExistence type="inferred from homology"/>
<keyword id="KW-0479">Metal-binding</keyword>
<keyword id="KW-0665">Pyrimidine biosynthesis</keyword>
<keyword id="KW-0862">Zinc</keyword>
<gene>
    <name evidence="1" type="primary">pyrI</name>
    <name type="ordered locus">ECSE_4551</name>
</gene>
<dbReference type="EMBL" id="AP009240">
    <property type="protein sequence ID" value="BAG80075.1"/>
    <property type="molecule type" value="Genomic_DNA"/>
</dbReference>
<dbReference type="RefSeq" id="WP_000148581.1">
    <property type="nucleotide sequence ID" value="NC_011415.1"/>
</dbReference>
<dbReference type="SMR" id="B6I2F8"/>
<dbReference type="GeneID" id="93777580"/>
<dbReference type="KEGG" id="ecy:ECSE_4551"/>
<dbReference type="HOGENOM" id="CLU_128576_0_0_6"/>
<dbReference type="Proteomes" id="UP000008199">
    <property type="component" value="Chromosome"/>
</dbReference>
<dbReference type="GO" id="GO:0009347">
    <property type="term" value="C:aspartate carbamoyltransferase complex"/>
    <property type="evidence" value="ECO:0007669"/>
    <property type="project" value="InterPro"/>
</dbReference>
<dbReference type="GO" id="GO:0046872">
    <property type="term" value="F:metal ion binding"/>
    <property type="evidence" value="ECO:0007669"/>
    <property type="project" value="UniProtKB-KW"/>
</dbReference>
<dbReference type="GO" id="GO:0006207">
    <property type="term" value="P:'de novo' pyrimidine nucleobase biosynthetic process"/>
    <property type="evidence" value="ECO:0007669"/>
    <property type="project" value="InterPro"/>
</dbReference>
<dbReference type="GO" id="GO:0006221">
    <property type="term" value="P:pyrimidine nucleotide biosynthetic process"/>
    <property type="evidence" value="ECO:0007669"/>
    <property type="project" value="UniProtKB-UniRule"/>
</dbReference>
<dbReference type="FunFam" id="2.30.30.20:FF:000001">
    <property type="entry name" value="Aspartate carbamoyltransferase regulatory chain"/>
    <property type="match status" value="1"/>
</dbReference>
<dbReference type="FunFam" id="3.30.70.140:FF:000001">
    <property type="entry name" value="Aspartate carbamoyltransferase regulatory chain"/>
    <property type="match status" value="1"/>
</dbReference>
<dbReference type="Gene3D" id="2.30.30.20">
    <property type="entry name" value="Aspartate carbamoyltransferase regulatory subunit, C-terminal domain"/>
    <property type="match status" value="1"/>
</dbReference>
<dbReference type="Gene3D" id="3.30.70.140">
    <property type="entry name" value="Aspartate carbamoyltransferase regulatory subunit, N-terminal domain"/>
    <property type="match status" value="1"/>
</dbReference>
<dbReference type="HAMAP" id="MF_00002">
    <property type="entry name" value="Asp_carb_tr_reg"/>
    <property type="match status" value="1"/>
</dbReference>
<dbReference type="InterPro" id="IPR020545">
    <property type="entry name" value="Asp_carbamoyltransf_reg_N"/>
</dbReference>
<dbReference type="InterPro" id="IPR002801">
    <property type="entry name" value="Asp_carbamoylTrfase_reg"/>
</dbReference>
<dbReference type="InterPro" id="IPR020542">
    <property type="entry name" value="Asp_carbamoyltrfase_reg_C"/>
</dbReference>
<dbReference type="InterPro" id="IPR036792">
    <property type="entry name" value="Asp_carbatrfase_reg_C_sf"/>
</dbReference>
<dbReference type="InterPro" id="IPR036793">
    <property type="entry name" value="Asp_carbatrfase_reg_N_sf"/>
</dbReference>
<dbReference type="NCBIfam" id="TIGR00240">
    <property type="entry name" value="ATCase_reg"/>
    <property type="match status" value="1"/>
</dbReference>
<dbReference type="PANTHER" id="PTHR35805">
    <property type="entry name" value="ASPARTATE CARBAMOYLTRANSFERASE REGULATORY CHAIN"/>
    <property type="match status" value="1"/>
</dbReference>
<dbReference type="PANTHER" id="PTHR35805:SF1">
    <property type="entry name" value="ASPARTATE CARBAMOYLTRANSFERASE REGULATORY CHAIN"/>
    <property type="match status" value="1"/>
</dbReference>
<dbReference type="Pfam" id="PF01948">
    <property type="entry name" value="PyrI"/>
    <property type="match status" value="1"/>
</dbReference>
<dbReference type="Pfam" id="PF02748">
    <property type="entry name" value="PyrI_C"/>
    <property type="match status" value="1"/>
</dbReference>
<dbReference type="SUPFAM" id="SSF57825">
    <property type="entry name" value="Aspartate carbamoyltransferase, Regulatory-chain, C-terminal domain"/>
    <property type="match status" value="1"/>
</dbReference>
<dbReference type="SUPFAM" id="SSF54893">
    <property type="entry name" value="Aspartate carbamoyltransferase, Regulatory-chain, N-terminal domain"/>
    <property type="match status" value="1"/>
</dbReference>
<protein>
    <recommendedName>
        <fullName evidence="1">Aspartate carbamoyltransferase regulatory chain</fullName>
    </recommendedName>
</protein>
<sequence>MTHDNKLQVEAIKRGTVIDHIPAQIGFKLLSLFKLTETDQRITIGLNLPSGEMGRKDLIKIENTFLSEDQVDQLALYAPQATVNRIDNYEVVGKSRPSLPERIDNVLVCPNSNCISHAEPVSSSFAVRKRANDIALKCKYCEKEFSHNVVLAN</sequence>
<name>PYRI_ECOSE</name>
<comment type="function">
    <text evidence="1">Involved in allosteric regulation of aspartate carbamoyltransferase.</text>
</comment>
<comment type="cofactor">
    <cofactor evidence="1">
        <name>Zn(2+)</name>
        <dbReference type="ChEBI" id="CHEBI:29105"/>
    </cofactor>
    <text evidence="1">Binds 1 zinc ion per subunit.</text>
</comment>
<comment type="subunit">
    <text evidence="1">Contains catalytic and regulatory chains.</text>
</comment>
<comment type="similarity">
    <text evidence="1">Belongs to the PyrI family.</text>
</comment>
<organism>
    <name type="scientific">Escherichia coli (strain SE11)</name>
    <dbReference type="NCBI Taxonomy" id="409438"/>
    <lineage>
        <taxon>Bacteria</taxon>
        <taxon>Pseudomonadati</taxon>
        <taxon>Pseudomonadota</taxon>
        <taxon>Gammaproteobacteria</taxon>
        <taxon>Enterobacterales</taxon>
        <taxon>Enterobacteriaceae</taxon>
        <taxon>Escherichia</taxon>
    </lineage>
</organism>
<evidence type="ECO:0000255" key="1">
    <source>
        <dbReference type="HAMAP-Rule" id="MF_00002"/>
    </source>
</evidence>
<reference key="1">
    <citation type="journal article" date="2008" name="DNA Res.">
        <title>Complete genome sequence and comparative analysis of the wild-type commensal Escherichia coli strain SE11 isolated from a healthy adult.</title>
        <authorList>
            <person name="Oshima K."/>
            <person name="Toh H."/>
            <person name="Ogura Y."/>
            <person name="Sasamoto H."/>
            <person name="Morita H."/>
            <person name="Park S.-H."/>
            <person name="Ooka T."/>
            <person name="Iyoda S."/>
            <person name="Taylor T.D."/>
            <person name="Hayashi T."/>
            <person name="Itoh K."/>
            <person name="Hattori M."/>
        </authorList>
    </citation>
    <scope>NUCLEOTIDE SEQUENCE [LARGE SCALE GENOMIC DNA]</scope>
    <source>
        <strain>SE11</strain>
    </source>
</reference>
<feature type="chain" id="PRO_1000088825" description="Aspartate carbamoyltransferase regulatory chain">
    <location>
        <begin position="1"/>
        <end position="153"/>
    </location>
</feature>
<feature type="binding site" evidence="1">
    <location>
        <position position="109"/>
    </location>
    <ligand>
        <name>Zn(2+)</name>
        <dbReference type="ChEBI" id="CHEBI:29105"/>
    </ligand>
</feature>
<feature type="binding site" evidence="1">
    <location>
        <position position="114"/>
    </location>
    <ligand>
        <name>Zn(2+)</name>
        <dbReference type="ChEBI" id="CHEBI:29105"/>
    </ligand>
</feature>
<feature type="binding site" evidence="1">
    <location>
        <position position="138"/>
    </location>
    <ligand>
        <name>Zn(2+)</name>
        <dbReference type="ChEBI" id="CHEBI:29105"/>
    </ligand>
</feature>
<feature type="binding site" evidence="1">
    <location>
        <position position="141"/>
    </location>
    <ligand>
        <name>Zn(2+)</name>
        <dbReference type="ChEBI" id="CHEBI:29105"/>
    </ligand>
</feature>